<dbReference type="EC" id="6.3.4.3" evidence="1"/>
<dbReference type="EMBL" id="AE017333">
    <property type="protein sequence ID" value="AAU41208.1"/>
    <property type="molecule type" value="Genomic_DNA"/>
</dbReference>
<dbReference type="EMBL" id="CP000002">
    <property type="protein sequence ID" value="AAU23852.1"/>
    <property type="status" value="ALT_INIT"/>
    <property type="molecule type" value="Genomic_DNA"/>
</dbReference>
<dbReference type="RefSeq" id="WP_011201679.1">
    <property type="nucleotide sequence ID" value="NC_006322.1"/>
</dbReference>
<dbReference type="SMR" id="Q65IA6"/>
<dbReference type="STRING" id="279010.BL01370"/>
<dbReference type="KEGG" id="bld:BLi02328"/>
<dbReference type="KEGG" id="bli:BL01370"/>
<dbReference type="PATRIC" id="fig|279010.13.peg.2354"/>
<dbReference type="eggNOG" id="COG2759">
    <property type="taxonomic scope" value="Bacteria"/>
</dbReference>
<dbReference type="HOGENOM" id="CLU_003601_3_3_9"/>
<dbReference type="UniPathway" id="UPA00193"/>
<dbReference type="Proteomes" id="UP000000606">
    <property type="component" value="Chromosome"/>
</dbReference>
<dbReference type="GO" id="GO:0005524">
    <property type="term" value="F:ATP binding"/>
    <property type="evidence" value="ECO:0007669"/>
    <property type="project" value="UniProtKB-UniRule"/>
</dbReference>
<dbReference type="GO" id="GO:0004329">
    <property type="term" value="F:formate-tetrahydrofolate ligase activity"/>
    <property type="evidence" value="ECO:0007669"/>
    <property type="project" value="UniProtKB-UniRule"/>
</dbReference>
<dbReference type="GO" id="GO:0035999">
    <property type="term" value="P:tetrahydrofolate interconversion"/>
    <property type="evidence" value="ECO:0007669"/>
    <property type="project" value="UniProtKB-UniRule"/>
</dbReference>
<dbReference type="CDD" id="cd00477">
    <property type="entry name" value="FTHFS"/>
    <property type="match status" value="1"/>
</dbReference>
<dbReference type="FunFam" id="3.30.1510.10:FF:000001">
    <property type="entry name" value="Formate--tetrahydrofolate ligase"/>
    <property type="match status" value="1"/>
</dbReference>
<dbReference type="FunFam" id="3.10.410.10:FF:000001">
    <property type="entry name" value="Putative formate--tetrahydrofolate ligase"/>
    <property type="match status" value="1"/>
</dbReference>
<dbReference type="Gene3D" id="3.30.1510.10">
    <property type="entry name" value="Domain 2, N(10)-formyltetrahydrofolate synthetase"/>
    <property type="match status" value="1"/>
</dbReference>
<dbReference type="Gene3D" id="3.10.410.10">
    <property type="entry name" value="Formyltetrahydrofolate synthetase, domain 3"/>
    <property type="match status" value="1"/>
</dbReference>
<dbReference type="Gene3D" id="3.40.50.300">
    <property type="entry name" value="P-loop containing nucleotide triphosphate hydrolases"/>
    <property type="match status" value="1"/>
</dbReference>
<dbReference type="HAMAP" id="MF_01543">
    <property type="entry name" value="FTHFS"/>
    <property type="match status" value="1"/>
</dbReference>
<dbReference type="InterPro" id="IPR000559">
    <property type="entry name" value="Formate_THF_ligase"/>
</dbReference>
<dbReference type="InterPro" id="IPR020628">
    <property type="entry name" value="Formate_THF_ligase_CS"/>
</dbReference>
<dbReference type="InterPro" id="IPR027417">
    <property type="entry name" value="P-loop_NTPase"/>
</dbReference>
<dbReference type="NCBIfam" id="NF010030">
    <property type="entry name" value="PRK13505.1"/>
    <property type="match status" value="1"/>
</dbReference>
<dbReference type="Pfam" id="PF01268">
    <property type="entry name" value="FTHFS"/>
    <property type="match status" value="1"/>
</dbReference>
<dbReference type="SUPFAM" id="SSF52540">
    <property type="entry name" value="P-loop containing nucleoside triphosphate hydrolases"/>
    <property type="match status" value="1"/>
</dbReference>
<dbReference type="PROSITE" id="PS00721">
    <property type="entry name" value="FTHFS_1"/>
    <property type="match status" value="1"/>
</dbReference>
<dbReference type="PROSITE" id="PS00722">
    <property type="entry name" value="FTHFS_2"/>
    <property type="match status" value="1"/>
</dbReference>
<reference key="1">
    <citation type="journal article" date="2004" name="J. Mol. Microbiol. Biotechnol.">
        <title>The complete genome sequence of Bacillus licheniformis DSM13, an organism with great industrial potential.</title>
        <authorList>
            <person name="Veith B."/>
            <person name="Herzberg C."/>
            <person name="Steckel S."/>
            <person name="Feesche J."/>
            <person name="Maurer K.H."/>
            <person name="Ehrenreich P."/>
            <person name="Baeumer S."/>
            <person name="Henne A."/>
            <person name="Liesegang H."/>
            <person name="Merkl R."/>
            <person name="Ehrenreich A."/>
            <person name="Gottschalk G."/>
        </authorList>
    </citation>
    <scope>NUCLEOTIDE SEQUENCE [LARGE SCALE GENOMIC DNA]</scope>
    <source>
        <strain>ATCC 14580 / DSM 13 / JCM 2505 / CCUG 7422 / NBRC 12200 / NCIMB 9375 / NCTC 10341 / NRRL NRS-1264 / Gibson 46</strain>
    </source>
</reference>
<reference key="2">
    <citation type="journal article" date="2004" name="Genome Biol.">
        <title>Complete genome sequence of the industrial bacterium Bacillus licheniformis and comparisons with closely related Bacillus species.</title>
        <authorList>
            <person name="Rey M.W."/>
            <person name="Ramaiya P."/>
            <person name="Nelson B.A."/>
            <person name="Brody-Karpin S.D."/>
            <person name="Zaretsky E.J."/>
            <person name="Tang M."/>
            <person name="Lopez de Leon A."/>
            <person name="Xiang H."/>
            <person name="Gusti V."/>
            <person name="Clausen I.G."/>
            <person name="Olsen P.B."/>
            <person name="Rasmussen M.D."/>
            <person name="Andersen J.T."/>
            <person name="Joergensen P.L."/>
            <person name="Larsen T.S."/>
            <person name="Sorokin A."/>
            <person name="Bolotin A."/>
            <person name="Lapidus A."/>
            <person name="Galleron N."/>
            <person name="Ehrlich S.D."/>
            <person name="Berka R.M."/>
        </authorList>
    </citation>
    <scope>NUCLEOTIDE SEQUENCE [LARGE SCALE GENOMIC DNA]</scope>
    <source>
        <strain>ATCC 14580 / DSM 13 / JCM 2505 / CCUG 7422 / NBRC 12200 / NCIMB 9375 / NCTC 10341 / NRRL NRS-1264 / Gibson 46</strain>
    </source>
</reference>
<gene>
    <name evidence="1" type="primary">fhs</name>
    <name type="ordered locus">BLi02328</name>
    <name type="ordered locus">BL01370</name>
</gene>
<accession>Q65IA6</accession>
<accession>Q62TQ7</accession>
<organism>
    <name type="scientific">Bacillus licheniformis (strain ATCC 14580 / DSM 13 / JCM 2505 / CCUG 7422 / NBRC 12200 / NCIMB 9375 / NCTC 10341 / NRRL NRS-1264 / Gibson 46)</name>
    <dbReference type="NCBI Taxonomy" id="279010"/>
    <lineage>
        <taxon>Bacteria</taxon>
        <taxon>Bacillati</taxon>
        <taxon>Bacillota</taxon>
        <taxon>Bacilli</taxon>
        <taxon>Bacillales</taxon>
        <taxon>Bacillaceae</taxon>
        <taxon>Bacillus</taxon>
    </lineage>
</organism>
<name>FTHS_BACLD</name>
<sequence>MKSHLSDIEIAQRTELKPITEIARKLNINDEEIECFGCTKAKISLKIFERLKEKPDGQVILVTSINPTPAGEGKSTVTVGLSQALWQIGKKSIVAMREPSLGPTMGLKGGAAGGGYSQVLPMEDINLHFTGDMHAITAANNALAAFIDNHIHQGNELNIDIRKIVWKRALDLNDRALRETVVGLGGKANGFPREDGFDITVASEIMAVLCLARDLADLKKRLASMIVAYTVDGQPVTAGMLGVQGALALLLKDAIKPNLVQTVEGTPALVHGGPFANIAHGANSLIATKTAAKLADYVVTEAGFGADLGAEKFMHIKTRAGGFTPGAVVIVATVRALKMHGGTPLADLKQKDLEALKRGIANLAKHIETIDAFGLPYVVAVNRFVQDTEDELEAVLGWCRDNGHPAALCNVWEEGGKGGTDLAREVIHVMEQKDNRFSYLYELTDSIEDKLAKISRTVYGAEGVEFTEKAKKQLLELKKNGLDGLPVCVAKTQYSLSDDPGKIGRPQDFSITVRELKPSRGAGFIVALTGSILTMPGLPKHPAALKMDVDESGRAKGLF</sequence>
<comment type="catalytic activity">
    <reaction evidence="1">
        <text>(6S)-5,6,7,8-tetrahydrofolate + formate + ATP = (6R)-10-formyltetrahydrofolate + ADP + phosphate</text>
        <dbReference type="Rhea" id="RHEA:20221"/>
        <dbReference type="ChEBI" id="CHEBI:15740"/>
        <dbReference type="ChEBI" id="CHEBI:30616"/>
        <dbReference type="ChEBI" id="CHEBI:43474"/>
        <dbReference type="ChEBI" id="CHEBI:57453"/>
        <dbReference type="ChEBI" id="CHEBI:195366"/>
        <dbReference type="ChEBI" id="CHEBI:456216"/>
        <dbReference type="EC" id="6.3.4.3"/>
    </reaction>
</comment>
<comment type="pathway">
    <text evidence="1">One-carbon metabolism; tetrahydrofolate interconversion.</text>
</comment>
<comment type="similarity">
    <text evidence="1">Belongs to the formate--tetrahydrofolate ligase family.</text>
</comment>
<comment type="sequence caution" evidence="2">
    <conflict type="erroneous initiation">
        <sequence resource="EMBL-CDS" id="AAU23852"/>
    </conflict>
</comment>
<feature type="chain" id="PRO_0000199331" description="Formate--tetrahydrofolate ligase">
    <location>
        <begin position="1"/>
        <end position="559"/>
    </location>
</feature>
<feature type="binding site" evidence="1">
    <location>
        <begin position="68"/>
        <end position="75"/>
    </location>
    <ligand>
        <name>ATP</name>
        <dbReference type="ChEBI" id="CHEBI:30616"/>
    </ligand>
</feature>
<proteinExistence type="inferred from homology"/>
<keyword id="KW-0067">ATP-binding</keyword>
<keyword id="KW-0436">Ligase</keyword>
<keyword id="KW-0547">Nucleotide-binding</keyword>
<keyword id="KW-0554">One-carbon metabolism</keyword>
<keyword id="KW-1185">Reference proteome</keyword>
<evidence type="ECO:0000255" key="1">
    <source>
        <dbReference type="HAMAP-Rule" id="MF_01543"/>
    </source>
</evidence>
<evidence type="ECO:0000305" key="2"/>
<protein>
    <recommendedName>
        <fullName evidence="1">Formate--tetrahydrofolate ligase</fullName>
        <ecNumber evidence="1">6.3.4.3</ecNumber>
    </recommendedName>
    <alternativeName>
        <fullName evidence="1">Formyltetrahydrofolate synthetase</fullName>
        <shortName evidence="1">FHS</shortName>
        <shortName evidence="1">FTHFS</shortName>
    </alternativeName>
</protein>